<keyword id="KW-0067">ATP-binding</keyword>
<keyword id="KW-0436">Ligase</keyword>
<keyword id="KW-0547">Nucleotide-binding</keyword>
<keyword id="KW-1185">Reference proteome</keyword>
<name>EPMA_VIBCH</name>
<dbReference type="EC" id="6.3.2.-" evidence="1"/>
<dbReference type="EMBL" id="AE003852">
    <property type="protein sequence ID" value="AAF95796.1"/>
    <property type="status" value="ALT_INIT"/>
    <property type="molecule type" value="Genomic_DNA"/>
</dbReference>
<dbReference type="PIR" id="E82050">
    <property type="entry name" value="E82050"/>
</dbReference>
<dbReference type="RefSeq" id="NP_232283.2">
    <property type="nucleotide sequence ID" value="NC_002505.1"/>
</dbReference>
<dbReference type="RefSeq" id="WP_000185039.1">
    <property type="nucleotide sequence ID" value="NZ_LT906614.1"/>
</dbReference>
<dbReference type="SMR" id="Q9KNS6"/>
<dbReference type="STRING" id="243277.VC_2655"/>
<dbReference type="DNASU" id="2615672"/>
<dbReference type="EnsemblBacteria" id="AAF95796">
    <property type="protein sequence ID" value="AAF95796"/>
    <property type="gene ID" value="VC_2655"/>
</dbReference>
<dbReference type="KEGG" id="vch:VC_2655"/>
<dbReference type="PATRIC" id="fig|243277.26.peg.2531"/>
<dbReference type="eggNOG" id="COG2269">
    <property type="taxonomic scope" value="Bacteria"/>
</dbReference>
<dbReference type="HOGENOM" id="CLU_008255_1_1_6"/>
<dbReference type="Proteomes" id="UP000000584">
    <property type="component" value="Chromosome 1"/>
</dbReference>
<dbReference type="GO" id="GO:0005737">
    <property type="term" value="C:cytoplasm"/>
    <property type="evidence" value="ECO:0000318"/>
    <property type="project" value="GO_Central"/>
</dbReference>
<dbReference type="GO" id="GO:0016880">
    <property type="term" value="F:acid-ammonia (or amide) ligase activity"/>
    <property type="evidence" value="ECO:0007669"/>
    <property type="project" value="UniProtKB-UniRule"/>
</dbReference>
<dbReference type="GO" id="GO:0005524">
    <property type="term" value="F:ATP binding"/>
    <property type="evidence" value="ECO:0007669"/>
    <property type="project" value="UniProtKB-UniRule"/>
</dbReference>
<dbReference type="GO" id="GO:0004824">
    <property type="term" value="F:lysine-tRNA ligase activity"/>
    <property type="evidence" value="ECO:0000318"/>
    <property type="project" value="GO_Central"/>
</dbReference>
<dbReference type="GO" id="GO:0000049">
    <property type="term" value="F:tRNA binding"/>
    <property type="evidence" value="ECO:0000318"/>
    <property type="project" value="GO_Central"/>
</dbReference>
<dbReference type="GO" id="GO:0006430">
    <property type="term" value="P:lysyl-tRNA aminoacylation"/>
    <property type="evidence" value="ECO:0000318"/>
    <property type="project" value="GO_Central"/>
</dbReference>
<dbReference type="FunFam" id="3.30.930.10:FF:000017">
    <property type="entry name" value="Elongation factor P--(R)-beta-lysine ligase"/>
    <property type="match status" value="1"/>
</dbReference>
<dbReference type="Gene3D" id="3.30.930.10">
    <property type="entry name" value="Bira Bifunctional Protein, Domain 2"/>
    <property type="match status" value="1"/>
</dbReference>
<dbReference type="HAMAP" id="MF_00174">
    <property type="entry name" value="EF_P_modif_A"/>
    <property type="match status" value="1"/>
</dbReference>
<dbReference type="InterPro" id="IPR004364">
    <property type="entry name" value="Aa-tRNA-synt_II"/>
</dbReference>
<dbReference type="InterPro" id="IPR006195">
    <property type="entry name" value="aa-tRNA-synth_II"/>
</dbReference>
<dbReference type="InterPro" id="IPR045864">
    <property type="entry name" value="aa-tRNA-synth_II/BPL/LPL"/>
</dbReference>
<dbReference type="InterPro" id="IPR004525">
    <property type="entry name" value="EpmA"/>
</dbReference>
<dbReference type="InterPro" id="IPR018149">
    <property type="entry name" value="Lys-tRNA-synth_II_C"/>
</dbReference>
<dbReference type="NCBIfam" id="TIGR00462">
    <property type="entry name" value="genX"/>
    <property type="match status" value="1"/>
</dbReference>
<dbReference type="NCBIfam" id="NF006828">
    <property type="entry name" value="PRK09350.1"/>
    <property type="match status" value="1"/>
</dbReference>
<dbReference type="PANTHER" id="PTHR42918:SF6">
    <property type="entry name" value="ELONGATION FACTOR P--(R)-BETA-LYSINE LIGASE"/>
    <property type="match status" value="1"/>
</dbReference>
<dbReference type="PANTHER" id="PTHR42918">
    <property type="entry name" value="LYSYL-TRNA SYNTHETASE"/>
    <property type="match status" value="1"/>
</dbReference>
<dbReference type="Pfam" id="PF00152">
    <property type="entry name" value="tRNA-synt_2"/>
    <property type="match status" value="1"/>
</dbReference>
<dbReference type="PRINTS" id="PR00982">
    <property type="entry name" value="TRNASYNTHLYS"/>
</dbReference>
<dbReference type="SUPFAM" id="SSF55681">
    <property type="entry name" value="Class II aaRS and biotin synthetases"/>
    <property type="match status" value="1"/>
</dbReference>
<dbReference type="PROSITE" id="PS50862">
    <property type="entry name" value="AA_TRNA_LIGASE_II"/>
    <property type="match status" value="1"/>
</dbReference>
<proteinExistence type="inferred from homology"/>
<comment type="function">
    <text evidence="1">With EpmB is involved in the beta-lysylation step of the post-translational modification of translation elongation factor P (EF-P). Catalyzes the ATP-dependent activation of (R)-beta-lysine produced by EpmB, forming a lysyl-adenylate, from which the beta-lysyl moiety is then transferred to the epsilon-amino group of a conserved specific lysine residue in EF-P.</text>
</comment>
<comment type="catalytic activity">
    <reaction evidence="1">
        <text>D-beta-lysine + L-lysyl-[protein] + ATP = N(6)-((3R)-3,6-diaminohexanoyl)-L-lysyl-[protein] + AMP + diphosphate + H(+)</text>
        <dbReference type="Rhea" id="RHEA:83435"/>
        <dbReference type="Rhea" id="RHEA-COMP:9752"/>
        <dbReference type="Rhea" id="RHEA-COMP:20131"/>
        <dbReference type="ChEBI" id="CHEBI:15378"/>
        <dbReference type="ChEBI" id="CHEBI:29969"/>
        <dbReference type="ChEBI" id="CHEBI:30616"/>
        <dbReference type="ChEBI" id="CHEBI:33019"/>
        <dbReference type="ChEBI" id="CHEBI:84138"/>
        <dbReference type="ChEBI" id="CHEBI:156053"/>
        <dbReference type="ChEBI" id="CHEBI:456215"/>
    </reaction>
    <physiologicalReaction direction="left-to-right" evidence="1">
        <dbReference type="Rhea" id="RHEA:83436"/>
    </physiologicalReaction>
</comment>
<comment type="subunit">
    <text evidence="1">Homodimer.</text>
</comment>
<comment type="similarity">
    <text evidence="1">Belongs to the class-II aminoacyl-tRNA synthetase family. EpmA subfamily.</text>
</comment>
<comment type="sequence caution" evidence="2">
    <conflict type="erroneous initiation">
        <sequence resource="EMBL-CDS" id="AAF95796"/>
    </conflict>
    <text>Extended N-terminus.</text>
</comment>
<gene>
    <name evidence="1" type="primary">epmA</name>
    <name type="synonym">yjeA</name>
    <name type="ordered locus">VC_2655</name>
</gene>
<evidence type="ECO:0000255" key="1">
    <source>
        <dbReference type="HAMAP-Rule" id="MF_00174"/>
    </source>
</evidence>
<evidence type="ECO:0000305" key="2"/>
<reference key="1">
    <citation type="journal article" date="2000" name="Nature">
        <title>DNA sequence of both chromosomes of the cholera pathogen Vibrio cholerae.</title>
        <authorList>
            <person name="Heidelberg J.F."/>
            <person name="Eisen J.A."/>
            <person name="Nelson W.C."/>
            <person name="Clayton R.A."/>
            <person name="Gwinn M.L."/>
            <person name="Dodson R.J."/>
            <person name="Haft D.H."/>
            <person name="Hickey E.K."/>
            <person name="Peterson J.D."/>
            <person name="Umayam L.A."/>
            <person name="Gill S.R."/>
            <person name="Nelson K.E."/>
            <person name="Read T.D."/>
            <person name="Tettelin H."/>
            <person name="Richardson D.L."/>
            <person name="Ermolaeva M.D."/>
            <person name="Vamathevan J.J."/>
            <person name="Bass S."/>
            <person name="Qin H."/>
            <person name="Dragoi I."/>
            <person name="Sellers P."/>
            <person name="McDonald L.A."/>
            <person name="Utterback T.R."/>
            <person name="Fleischmann R.D."/>
            <person name="Nierman W.C."/>
            <person name="White O."/>
            <person name="Salzberg S.L."/>
            <person name="Smith H.O."/>
            <person name="Colwell R.R."/>
            <person name="Mekalanos J.J."/>
            <person name="Venter J.C."/>
            <person name="Fraser C.M."/>
        </authorList>
    </citation>
    <scope>NUCLEOTIDE SEQUENCE [LARGE SCALE GENOMIC DNA]</scope>
    <source>
        <strain>ATCC 39315 / El Tor Inaba N16961</strain>
    </source>
</reference>
<protein>
    <recommendedName>
        <fullName evidence="1">Elongation factor P--(R)-beta-lysine ligase</fullName>
        <shortName evidence="1">EF-P--(R)-beta-lysine ligase</shortName>
        <ecNumber evidence="1">6.3.2.-</ecNumber>
    </recommendedName>
    <alternativeName>
        <fullName evidence="1">EF-P post-translational modification enzyme A</fullName>
    </alternativeName>
    <alternativeName>
        <fullName evidence="1">EF-P-lysine lysyltransferase</fullName>
    </alternativeName>
</protein>
<organism>
    <name type="scientific">Vibrio cholerae serotype O1 (strain ATCC 39315 / El Tor Inaba N16961)</name>
    <dbReference type="NCBI Taxonomy" id="243277"/>
    <lineage>
        <taxon>Bacteria</taxon>
        <taxon>Pseudomonadati</taxon>
        <taxon>Pseudomonadota</taxon>
        <taxon>Gammaproteobacteria</taxon>
        <taxon>Vibrionales</taxon>
        <taxon>Vibrionaceae</taxon>
        <taxon>Vibrio</taxon>
    </lineage>
</organism>
<accession>Q9KNS6</accession>
<sequence>MTNSDWMPTASISQLKQRATLLRQIREFFAERNVLEVETPAMSHATVTDIHLHTFKTEFVGPGYAKGSALHLMTSPEFHMKRLLAAGSGCIYQLGKAFRNEENGRYHNPEFTMLEWYRIGFDHHALMDEMDALLQLVLRCGSAERMTYQEAFLNVLGVCPLEEEMRELKQVAATLGLSDIAEPEEDRDTLLQLLFSIGIEPKIGQITPAFVYDFPASQAALAKINPADPRVADRFEVYFKGIELANGFHELDNPAEQLARFKADNAKRLEMGLTEQPIDYHLIAALEAGLPECAGVALGIDRLIMLALGEDHIDKVTAFPFPRA</sequence>
<feature type="chain" id="PRO_0000152730" description="Elongation factor P--(R)-beta-lysine ligase">
    <location>
        <begin position="1"/>
        <end position="324"/>
    </location>
</feature>
<feature type="binding site" evidence="1">
    <location>
        <begin position="75"/>
        <end position="77"/>
    </location>
    <ligand>
        <name>substrate</name>
    </ligand>
</feature>
<feature type="binding site" evidence="1">
    <location>
        <begin position="99"/>
        <end position="101"/>
    </location>
    <ligand>
        <name>ATP</name>
        <dbReference type="ChEBI" id="CHEBI:30616"/>
    </ligand>
</feature>
<feature type="binding site" evidence="1">
    <location>
        <position position="108"/>
    </location>
    <ligand>
        <name>ATP</name>
        <dbReference type="ChEBI" id="CHEBI:30616"/>
    </ligand>
</feature>
<feature type="binding site" evidence="1">
    <location>
        <position position="117"/>
    </location>
    <ligand>
        <name>substrate</name>
    </ligand>
</feature>
<feature type="binding site" evidence="1">
    <location>
        <begin position="243"/>
        <end position="244"/>
    </location>
    <ligand>
        <name>ATP</name>
        <dbReference type="ChEBI" id="CHEBI:30616"/>
    </ligand>
</feature>
<feature type="binding site" evidence="1">
    <location>
        <position position="250"/>
    </location>
    <ligand>
        <name>substrate</name>
    </ligand>
</feature>
<feature type="binding site" evidence="1">
    <location>
        <position position="299"/>
    </location>
    <ligand>
        <name>ATP</name>
        <dbReference type="ChEBI" id="CHEBI:30616"/>
    </ligand>
</feature>